<gene>
    <name evidence="1" type="primary">nuoA</name>
    <name type="ordered locus">ETA_12040</name>
</gene>
<feature type="chain" id="PRO_0000362677" description="NADH-quinone oxidoreductase subunit A">
    <location>
        <begin position="1"/>
        <end position="145"/>
    </location>
</feature>
<feature type="transmembrane region" description="Helical" evidence="1">
    <location>
        <begin position="14"/>
        <end position="34"/>
    </location>
</feature>
<feature type="transmembrane region" description="Helical" evidence="1">
    <location>
        <begin position="66"/>
        <end position="86"/>
    </location>
</feature>
<feature type="transmembrane region" description="Helical" evidence="1">
    <location>
        <begin position="96"/>
        <end position="116"/>
    </location>
</feature>
<proteinExistence type="inferred from homology"/>
<evidence type="ECO:0000255" key="1">
    <source>
        <dbReference type="HAMAP-Rule" id="MF_01394"/>
    </source>
</evidence>
<keyword id="KW-0997">Cell inner membrane</keyword>
<keyword id="KW-1003">Cell membrane</keyword>
<keyword id="KW-0472">Membrane</keyword>
<keyword id="KW-0520">NAD</keyword>
<keyword id="KW-0874">Quinone</keyword>
<keyword id="KW-1185">Reference proteome</keyword>
<keyword id="KW-1278">Translocase</keyword>
<keyword id="KW-0812">Transmembrane</keyword>
<keyword id="KW-1133">Transmembrane helix</keyword>
<keyword id="KW-0813">Transport</keyword>
<keyword id="KW-0830">Ubiquinone</keyword>
<reference key="1">
    <citation type="journal article" date="2008" name="Environ. Microbiol.">
        <title>The genome of Erwinia tasmaniensis strain Et1/99, a non-pathogenic bacterium in the genus Erwinia.</title>
        <authorList>
            <person name="Kube M."/>
            <person name="Migdoll A.M."/>
            <person name="Mueller I."/>
            <person name="Kuhl H."/>
            <person name="Beck A."/>
            <person name="Reinhardt R."/>
            <person name="Geider K."/>
        </authorList>
    </citation>
    <scope>NUCLEOTIDE SEQUENCE [LARGE SCALE GENOMIC DNA]</scope>
    <source>
        <strain>DSM 17950 / CFBP 7177 / CIP 109463 / NCPPB 4357 / Et1/99</strain>
    </source>
</reference>
<protein>
    <recommendedName>
        <fullName evidence="1">NADH-quinone oxidoreductase subunit A</fullName>
        <ecNumber evidence="1">7.1.1.-</ecNumber>
    </recommendedName>
    <alternativeName>
        <fullName evidence="1">NADH dehydrogenase I subunit A</fullName>
    </alternativeName>
    <alternativeName>
        <fullName evidence="1">NDH-1 subunit A</fullName>
    </alternativeName>
    <alternativeName>
        <fullName evidence="1">NUO1</fullName>
    </alternativeName>
</protein>
<organism>
    <name type="scientific">Erwinia tasmaniensis (strain DSM 17950 / CFBP 7177 / CIP 109463 / NCPPB 4357 / Et1/99)</name>
    <dbReference type="NCBI Taxonomy" id="465817"/>
    <lineage>
        <taxon>Bacteria</taxon>
        <taxon>Pseudomonadati</taxon>
        <taxon>Pseudomonadota</taxon>
        <taxon>Gammaproteobacteria</taxon>
        <taxon>Enterobacterales</taxon>
        <taxon>Erwiniaceae</taxon>
        <taxon>Erwinia</taxon>
    </lineage>
</organism>
<name>NUOA_ERWT9</name>
<sequence>MSTTTEVVAHHWAFAVFLIVSIGLCCLMLAGAWFLGGKARGRHTNTPFESGIASVGTAKLRLSAKFYLVAMFFVIFDVEALYLYAWSTAIRESGWVGFVEAAIFILVLLAGLFYLVRIGALDWAPARRQFDVKPTTISHANRQKP</sequence>
<accession>B2VIV3</accession>
<dbReference type="EC" id="7.1.1.-" evidence="1"/>
<dbReference type="EMBL" id="CU468135">
    <property type="protein sequence ID" value="CAO96250.1"/>
    <property type="molecule type" value="Genomic_DNA"/>
</dbReference>
<dbReference type="RefSeq" id="WP_012440947.1">
    <property type="nucleotide sequence ID" value="NC_010694.1"/>
</dbReference>
<dbReference type="SMR" id="B2VIV3"/>
<dbReference type="STRING" id="465817.ETA_12040"/>
<dbReference type="KEGG" id="eta:ETA_12040"/>
<dbReference type="eggNOG" id="COG0838">
    <property type="taxonomic scope" value="Bacteria"/>
</dbReference>
<dbReference type="HOGENOM" id="CLU_119549_2_0_6"/>
<dbReference type="OrthoDB" id="9791970at2"/>
<dbReference type="Proteomes" id="UP000001726">
    <property type="component" value="Chromosome"/>
</dbReference>
<dbReference type="GO" id="GO:0030964">
    <property type="term" value="C:NADH dehydrogenase complex"/>
    <property type="evidence" value="ECO:0007669"/>
    <property type="project" value="TreeGrafter"/>
</dbReference>
<dbReference type="GO" id="GO:0005886">
    <property type="term" value="C:plasma membrane"/>
    <property type="evidence" value="ECO:0007669"/>
    <property type="project" value="UniProtKB-SubCell"/>
</dbReference>
<dbReference type="GO" id="GO:0008137">
    <property type="term" value="F:NADH dehydrogenase (ubiquinone) activity"/>
    <property type="evidence" value="ECO:0007669"/>
    <property type="project" value="InterPro"/>
</dbReference>
<dbReference type="GO" id="GO:0050136">
    <property type="term" value="F:NADH:ubiquinone reductase (non-electrogenic) activity"/>
    <property type="evidence" value="ECO:0007669"/>
    <property type="project" value="UniProtKB-UniRule"/>
</dbReference>
<dbReference type="GO" id="GO:0048038">
    <property type="term" value="F:quinone binding"/>
    <property type="evidence" value="ECO:0007669"/>
    <property type="project" value="UniProtKB-KW"/>
</dbReference>
<dbReference type="FunFam" id="1.20.58.1610:FF:000003">
    <property type="entry name" value="NADH-quinone oxidoreductase subunit A"/>
    <property type="match status" value="1"/>
</dbReference>
<dbReference type="Gene3D" id="1.20.58.1610">
    <property type="entry name" value="NADH:ubiquinone/plastoquinone oxidoreductase, chain 3"/>
    <property type="match status" value="1"/>
</dbReference>
<dbReference type="HAMAP" id="MF_01394">
    <property type="entry name" value="NDH1_NuoA"/>
    <property type="match status" value="1"/>
</dbReference>
<dbReference type="InterPro" id="IPR023043">
    <property type="entry name" value="NAD(P)H_OxRDtase_bac/plastid"/>
</dbReference>
<dbReference type="InterPro" id="IPR000440">
    <property type="entry name" value="NADH_UbQ/plastoQ_OxRdtase_su3"/>
</dbReference>
<dbReference type="InterPro" id="IPR038430">
    <property type="entry name" value="NDAH_ubi_oxred_su3_sf"/>
</dbReference>
<dbReference type="PANTHER" id="PTHR11058:SF21">
    <property type="entry name" value="NADH-QUINONE OXIDOREDUCTASE SUBUNIT A"/>
    <property type="match status" value="1"/>
</dbReference>
<dbReference type="PANTHER" id="PTHR11058">
    <property type="entry name" value="NADH-UBIQUINONE OXIDOREDUCTASE CHAIN 3"/>
    <property type="match status" value="1"/>
</dbReference>
<dbReference type="Pfam" id="PF00507">
    <property type="entry name" value="Oxidored_q4"/>
    <property type="match status" value="1"/>
</dbReference>
<comment type="function">
    <text evidence="1">NDH-1 shuttles electrons from NADH, via FMN and iron-sulfur (Fe-S) centers, to quinones in the respiratory chain. The immediate electron acceptor for the enzyme in this species is believed to be ubiquinone. Couples the redox reaction to proton translocation (for every two electrons transferred, four hydrogen ions are translocated across the cytoplasmic membrane), and thus conserves the redox energy in a proton gradient.</text>
</comment>
<comment type="catalytic activity">
    <reaction evidence="1">
        <text>a quinone + NADH + 5 H(+)(in) = a quinol + NAD(+) + 4 H(+)(out)</text>
        <dbReference type="Rhea" id="RHEA:57888"/>
        <dbReference type="ChEBI" id="CHEBI:15378"/>
        <dbReference type="ChEBI" id="CHEBI:24646"/>
        <dbReference type="ChEBI" id="CHEBI:57540"/>
        <dbReference type="ChEBI" id="CHEBI:57945"/>
        <dbReference type="ChEBI" id="CHEBI:132124"/>
    </reaction>
</comment>
<comment type="subunit">
    <text evidence="1">NDH-1 is composed of 13 different subunits. Subunits NuoA, H, J, K, L, M, N constitute the membrane sector of the complex.</text>
</comment>
<comment type="subcellular location">
    <subcellularLocation>
        <location evidence="1">Cell inner membrane</location>
        <topology evidence="1">Multi-pass membrane protein</topology>
    </subcellularLocation>
</comment>
<comment type="similarity">
    <text evidence="1">Belongs to the complex I subunit 3 family.</text>
</comment>